<name>PNP_NOSP7</name>
<feature type="chain" id="PRO_1000192476" description="Polyribonucleotide nucleotidyltransferase">
    <location>
        <begin position="1"/>
        <end position="718"/>
    </location>
</feature>
<feature type="domain" description="KH" evidence="1">
    <location>
        <begin position="563"/>
        <end position="622"/>
    </location>
</feature>
<feature type="domain" description="S1 motif" evidence="1">
    <location>
        <begin position="632"/>
        <end position="700"/>
    </location>
</feature>
<feature type="binding site" evidence="1">
    <location>
        <position position="496"/>
    </location>
    <ligand>
        <name>Mg(2+)</name>
        <dbReference type="ChEBI" id="CHEBI:18420"/>
    </ligand>
</feature>
<feature type="binding site" evidence="1">
    <location>
        <position position="502"/>
    </location>
    <ligand>
        <name>Mg(2+)</name>
        <dbReference type="ChEBI" id="CHEBI:18420"/>
    </ligand>
</feature>
<proteinExistence type="inferred from homology"/>
<sequence length="718" mass="78160">MAEVDKSISFDGRDIRLKVGLLAPQAGGSVLIESGDTSVLVTATRSQAREGIDFLPLTVDYEERLYAAGRIPGGIMRREGRPPEKTILTSRLIDRPMRPLFPSWLRDDLQIIALTLSMDELVPPDVLAVTGASIATLIAQIPFNGPMAAVRVGLVGDDFIINPTYAEIEAGDLDLVVAGSPHGVIMVEAGANQLPERDIIEAIDFGYEAVRDLIKAQQDLVAELGLVIVQEAPPEVDQTLENYIRDRASGQIKKILSQFTFTKPERDAALDVVKDEIATTIKELPEEDPIRVAATANNKALGNTFKDITKYFMRRQIIEDNVRVDGRKLDEVRRVSCLVGVLPKRVHGSGLFNRELTQVLSTCTLGTPGDAQNLNDDMQLDQHKRYLHHYNFPPFSVGETKPMRSPGRREIGHGALAERSLIPVLPSKEQFPYVIRIVSEVLSSNGSTSMGSVCGSTLALMDAGVPILKPVSGAAMGLIKDGDEVRILTDIQGIEDFLGDMDFKVAGTDTGITALQMDMKIPGLSLDVISQAVHQAKAARLHILEKMLACIDTPRIETSPYAPRLLTIKIDSDMIGLVIGPGGKTIKGITEETGAKIDIEDDGTVTISAVDENKAKRARNIIQGMTRKLHEGDVYAGRITRIIPIGAFVEFLPGKEGMIHISQLADYRVGKVEDEVAVGDEVIIKVREIDNKGRINLTRLGIHPDQAAAAREAAAVNR</sequence>
<reference key="1">
    <citation type="journal article" date="2013" name="Plant Physiol.">
        <title>A Nostoc punctiforme Sugar Transporter Necessary to Establish a Cyanobacterium-Plant Symbiosis.</title>
        <authorList>
            <person name="Ekman M."/>
            <person name="Picossi S."/>
            <person name="Campbell E.L."/>
            <person name="Meeks J.C."/>
            <person name="Flores E."/>
        </authorList>
    </citation>
    <scope>NUCLEOTIDE SEQUENCE [LARGE SCALE GENOMIC DNA]</scope>
    <source>
        <strain>ATCC 29133 / PCC 73102</strain>
    </source>
</reference>
<dbReference type="EC" id="2.7.7.8" evidence="1"/>
<dbReference type="EMBL" id="CP001037">
    <property type="protein sequence ID" value="ACC82020.1"/>
    <property type="molecule type" value="Genomic_DNA"/>
</dbReference>
<dbReference type="RefSeq" id="WP_012409992.1">
    <property type="nucleotide sequence ID" value="NC_010628.1"/>
</dbReference>
<dbReference type="SMR" id="B2J2V3"/>
<dbReference type="STRING" id="63737.Npun_R3625"/>
<dbReference type="EnsemblBacteria" id="ACC82020">
    <property type="protein sequence ID" value="ACC82020"/>
    <property type="gene ID" value="Npun_R3625"/>
</dbReference>
<dbReference type="KEGG" id="npu:Npun_R3625"/>
<dbReference type="eggNOG" id="COG1185">
    <property type="taxonomic scope" value="Bacteria"/>
</dbReference>
<dbReference type="HOGENOM" id="CLU_004217_2_2_3"/>
<dbReference type="OrthoDB" id="9804305at2"/>
<dbReference type="PhylomeDB" id="B2J2V3"/>
<dbReference type="Proteomes" id="UP000001191">
    <property type="component" value="Chromosome"/>
</dbReference>
<dbReference type="GO" id="GO:0005829">
    <property type="term" value="C:cytosol"/>
    <property type="evidence" value="ECO:0007669"/>
    <property type="project" value="TreeGrafter"/>
</dbReference>
<dbReference type="GO" id="GO:0000175">
    <property type="term" value="F:3'-5'-RNA exonuclease activity"/>
    <property type="evidence" value="ECO:0007669"/>
    <property type="project" value="TreeGrafter"/>
</dbReference>
<dbReference type="GO" id="GO:0000287">
    <property type="term" value="F:magnesium ion binding"/>
    <property type="evidence" value="ECO:0007669"/>
    <property type="project" value="UniProtKB-UniRule"/>
</dbReference>
<dbReference type="GO" id="GO:0004654">
    <property type="term" value="F:polyribonucleotide nucleotidyltransferase activity"/>
    <property type="evidence" value="ECO:0007669"/>
    <property type="project" value="UniProtKB-UniRule"/>
</dbReference>
<dbReference type="GO" id="GO:0003723">
    <property type="term" value="F:RNA binding"/>
    <property type="evidence" value="ECO:0007669"/>
    <property type="project" value="UniProtKB-UniRule"/>
</dbReference>
<dbReference type="GO" id="GO:0006402">
    <property type="term" value="P:mRNA catabolic process"/>
    <property type="evidence" value="ECO:0007669"/>
    <property type="project" value="UniProtKB-UniRule"/>
</dbReference>
<dbReference type="GO" id="GO:0006396">
    <property type="term" value="P:RNA processing"/>
    <property type="evidence" value="ECO:0007669"/>
    <property type="project" value="InterPro"/>
</dbReference>
<dbReference type="CDD" id="cd02393">
    <property type="entry name" value="KH-I_PNPase"/>
    <property type="match status" value="1"/>
</dbReference>
<dbReference type="CDD" id="cd11363">
    <property type="entry name" value="RNase_PH_PNPase_1"/>
    <property type="match status" value="1"/>
</dbReference>
<dbReference type="CDD" id="cd11364">
    <property type="entry name" value="RNase_PH_PNPase_2"/>
    <property type="match status" value="1"/>
</dbReference>
<dbReference type="CDD" id="cd04472">
    <property type="entry name" value="S1_PNPase"/>
    <property type="match status" value="1"/>
</dbReference>
<dbReference type="FunFam" id="3.30.1370.10:FF:000001">
    <property type="entry name" value="Polyribonucleotide nucleotidyltransferase"/>
    <property type="match status" value="1"/>
</dbReference>
<dbReference type="FunFam" id="3.30.230.70:FF:000001">
    <property type="entry name" value="Polyribonucleotide nucleotidyltransferase"/>
    <property type="match status" value="1"/>
</dbReference>
<dbReference type="FunFam" id="3.30.230.70:FF:000002">
    <property type="entry name" value="Polyribonucleotide nucleotidyltransferase"/>
    <property type="match status" value="1"/>
</dbReference>
<dbReference type="Gene3D" id="3.30.230.70">
    <property type="entry name" value="GHMP Kinase, N-terminal domain"/>
    <property type="match status" value="2"/>
</dbReference>
<dbReference type="Gene3D" id="3.30.1370.10">
    <property type="entry name" value="K Homology domain, type 1"/>
    <property type="match status" value="1"/>
</dbReference>
<dbReference type="Gene3D" id="2.40.50.140">
    <property type="entry name" value="Nucleic acid-binding proteins"/>
    <property type="match status" value="1"/>
</dbReference>
<dbReference type="HAMAP" id="MF_01595">
    <property type="entry name" value="PNPase"/>
    <property type="match status" value="1"/>
</dbReference>
<dbReference type="InterPro" id="IPR001247">
    <property type="entry name" value="ExoRNase_PH_dom1"/>
</dbReference>
<dbReference type="InterPro" id="IPR015847">
    <property type="entry name" value="ExoRNase_PH_dom2"/>
</dbReference>
<dbReference type="InterPro" id="IPR036345">
    <property type="entry name" value="ExoRNase_PH_dom2_sf"/>
</dbReference>
<dbReference type="InterPro" id="IPR004087">
    <property type="entry name" value="KH_dom"/>
</dbReference>
<dbReference type="InterPro" id="IPR004088">
    <property type="entry name" value="KH_dom_type_1"/>
</dbReference>
<dbReference type="InterPro" id="IPR036612">
    <property type="entry name" value="KH_dom_type_1_sf"/>
</dbReference>
<dbReference type="InterPro" id="IPR012340">
    <property type="entry name" value="NA-bd_OB-fold"/>
</dbReference>
<dbReference type="InterPro" id="IPR012162">
    <property type="entry name" value="PNPase"/>
</dbReference>
<dbReference type="InterPro" id="IPR027408">
    <property type="entry name" value="PNPase/RNase_PH_dom_sf"/>
</dbReference>
<dbReference type="InterPro" id="IPR015848">
    <property type="entry name" value="PNPase_PH_RNA-bd_bac/org-type"/>
</dbReference>
<dbReference type="InterPro" id="IPR036456">
    <property type="entry name" value="PNPase_PH_RNA-bd_sf"/>
</dbReference>
<dbReference type="InterPro" id="IPR020568">
    <property type="entry name" value="Ribosomal_Su5_D2-typ_SF"/>
</dbReference>
<dbReference type="InterPro" id="IPR003029">
    <property type="entry name" value="S1_domain"/>
</dbReference>
<dbReference type="NCBIfam" id="TIGR03591">
    <property type="entry name" value="polynuc_phos"/>
    <property type="match status" value="1"/>
</dbReference>
<dbReference type="NCBIfam" id="NF008805">
    <property type="entry name" value="PRK11824.1"/>
    <property type="match status" value="1"/>
</dbReference>
<dbReference type="PANTHER" id="PTHR11252">
    <property type="entry name" value="POLYRIBONUCLEOTIDE NUCLEOTIDYLTRANSFERASE"/>
    <property type="match status" value="1"/>
</dbReference>
<dbReference type="PANTHER" id="PTHR11252:SF0">
    <property type="entry name" value="POLYRIBONUCLEOTIDE NUCLEOTIDYLTRANSFERASE 1, MITOCHONDRIAL"/>
    <property type="match status" value="1"/>
</dbReference>
<dbReference type="Pfam" id="PF00013">
    <property type="entry name" value="KH_1"/>
    <property type="match status" value="1"/>
</dbReference>
<dbReference type="Pfam" id="PF03726">
    <property type="entry name" value="PNPase"/>
    <property type="match status" value="1"/>
</dbReference>
<dbReference type="Pfam" id="PF01138">
    <property type="entry name" value="RNase_PH"/>
    <property type="match status" value="2"/>
</dbReference>
<dbReference type="Pfam" id="PF03725">
    <property type="entry name" value="RNase_PH_C"/>
    <property type="match status" value="2"/>
</dbReference>
<dbReference type="Pfam" id="PF00575">
    <property type="entry name" value="S1"/>
    <property type="match status" value="1"/>
</dbReference>
<dbReference type="PIRSF" id="PIRSF005499">
    <property type="entry name" value="PNPase"/>
    <property type="match status" value="1"/>
</dbReference>
<dbReference type="SMART" id="SM00322">
    <property type="entry name" value="KH"/>
    <property type="match status" value="1"/>
</dbReference>
<dbReference type="SMART" id="SM00316">
    <property type="entry name" value="S1"/>
    <property type="match status" value="1"/>
</dbReference>
<dbReference type="SUPFAM" id="SSF54791">
    <property type="entry name" value="Eukaryotic type KH-domain (KH-domain type I)"/>
    <property type="match status" value="1"/>
</dbReference>
<dbReference type="SUPFAM" id="SSF50249">
    <property type="entry name" value="Nucleic acid-binding proteins"/>
    <property type="match status" value="1"/>
</dbReference>
<dbReference type="SUPFAM" id="SSF46915">
    <property type="entry name" value="Polynucleotide phosphorylase/guanosine pentaphosphate synthase (PNPase/GPSI), domain 3"/>
    <property type="match status" value="1"/>
</dbReference>
<dbReference type="SUPFAM" id="SSF55666">
    <property type="entry name" value="Ribonuclease PH domain 2-like"/>
    <property type="match status" value="2"/>
</dbReference>
<dbReference type="SUPFAM" id="SSF54211">
    <property type="entry name" value="Ribosomal protein S5 domain 2-like"/>
    <property type="match status" value="2"/>
</dbReference>
<dbReference type="PROSITE" id="PS50084">
    <property type="entry name" value="KH_TYPE_1"/>
    <property type="match status" value="1"/>
</dbReference>
<dbReference type="PROSITE" id="PS50126">
    <property type="entry name" value="S1"/>
    <property type="match status" value="1"/>
</dbReference>
<protein>
    <recommendedName>
        <fullName evidence="1">Polyribonucleotide nucleotidyltransferase</fullName>
        <ecNumber evidence="1">2.7.7.8</ecNumber>
    </recommendedName>
    <alternativeName>
        <fullName evidence="1">Polynucleotide phosphorylase</fullName>
        <shortName evidence="1">PNPase</shortName>
    </alternativeName>
</protein>
<accession>B2J2V3</accession>
<comment type="function">
    <text evidence="1">Involved in mRNA degradation. Catalyzes the phosphorolysis of single-stranded polyribonucleotides processively in the 3'- to 5'-direction.</text>
</comment>
<comment type="catalytic activity">
    <reaction evidence="1">
        <text>RNA(n+1) + phosphate = RNA(n) + a ribonucleoside 5'-diphosphate</text>
        <dbReference type="Rhea" id="RHEA:22096"/>
        <dbReference type="Rhea" id="RHEA-COMP:14527"/>
        <dbReference type="Rhea" id="RHEA-COMP:17342"/>
        <dbReference type="ChEBI" id="CHEBI:43474"/>
        <dbReference type="ChEBI" id="CHEBI:57930"/>
        <dbReference type="ChEBI" id="CHEBI:140395"/>
        <dbReference type="EC" id="2.7.7.8"/>
    </reaction>
</comment>
<comment type="cofactor">
    <cofactor evidence="1">
        <name>Mg(2+)</name>
        <dbReference type="ChEBI" id="CHEBI:18420"/>
    </cofactor>
</comment>
<comment type="subcellular location">
    <subcellularLocation>
        <location evidence="1">Cytoplasm</location>
    </subcellularLocation>
</comment>
<comment type="similarity">
    <text evidence="1">Belongs to the polyribonucleotide nucleotidyltransferase family.</text>
</comment>
<evidence type="ECO:0000255" key="1">
    <source>
        <dbReference type="HAMAP-Rule" id="MF_01595"/>
    </source>
</evidence>
<gene>
    <name evidence="1" type="primary">pnp</name>
    <name type="ordered locus">Npun_R3625</name>
</gene>
<keyword id="KW-0963">Cytoplasm</keyword>
<keyword id="KW-0460">Magnesium</keyword>
<keyword id="KW-0479">Metal-binding</keyword>
<keyword id="KW-0548">Nucleotidyltransferase</keyword>
<keyword id="KW-1185">Reference proteome</keyword>
<keyword id="KW-0694">RNA-binding</keyword>
<keyword id="KW-0808">Transferase</keyword>
<organism>
    <name type="scientific">Nostoc punctiforme (strain ATCC 29133 / PCC 73102)</name>
    <dbReference type="NCBI Taxonomy" id="63737"/>
    <lineage>
        <taxon>Bacteria</taxon>
        <taxon>Bacillati</taxon>
        <taxon>Cyanobacteriota</taxon>
        <taxon>Cyanophyceae</taxon>
        <taxon>Nostocales</taxon>
        <taxon>Nostocaceae</taxon>
        <taxon>Nostoc</taxon>
    </lineage>
</organism>